<organism>
    <name type="scientific">Arabidopsis thaliana</name>
    <name type="common">Mouse-ear cress</name>
    <dbReference type="NCBI Taxonomy" id="3702"/>
    <lineage>
        <taxon>Eukaryota</taxon>
        <taxon>Viridiplantae</taxon>
        <taxon>Streptophyta</taxon>
        <taxon>Embryophyta</taxon>
        <taxon>Tracheophyta</taxon>
        <taxon>Spermatophyta</taxon>
        <taxon>Magnoliopsida</taxon>
        <taxon>eudicotyledons</taxon>
        <taxon>Gunneridae</taxon>
        <taxon>Pentapetalae</taxon>
        <taxon>rosids</taxon>
        <taxon>malvids</taxon>
        <taxon>Brassicales</taxon>
        <taxon>Brassicaceae</taxon>
        <taxon>Camelineae</taxon>
        <taxon>Arabidopsis</taxon>
    </lineage>
</organism>
<gene>
    <name type="primary">LECRK15</name>
    <name type="ordered locus">At3g45430</name>
    <name type="ORF">F9K21.10</name>
</gene>
<evidence type="ECO:0000250" key="1"/>
<evidence type="ECO:0000255" key="2"/>
<evidence type="ECO:0000255" key="3">
    <source>
        <dbReference type="PROSITE-ProRule" id="PRU00159"/>
    </source>
</evidence>
<evidence type="ECO:0000255" key="4">
    <source>
        <dbReference type="PROSITE-ProRule" id="PRU10027"/>
    </source>
</evidence>
<evidence type="ECO:0000256" key="5">
    <source>
        <dbReference type="SAM" id="MobiDB-lite"/>
    </source>
</evidence>
<evidence type="ECO:0000305" key="6"/>
<accession>Q9M1G4</accession>
<accession>A0A1I9LPQ8</accession>
<reference key="1">
    <citation type="journal article" date="2000" name="Nature">
        <title>Sequence and analysis of chromosome 3 of the plant Arabidopsis thaliana.</title>
        <authorList>
            <person name="Salanoubat M."/>
            <person name="Lemcke K."/>
            <person name="Rieger M."/>
            <person name="Ansorge W."/>
            <person name="Unseld M."/>
            <person name="Fartmann B."/>
            <person name="Valle G."/>
            <person name="Bloecker H."/>
            <person name="Perez-Alonso M."/>
            <person name="Obermaier B."/>
            <person name="Delseny M."/>
            <person name="Boutry M."/>
            <person name="Grivell L.A."/>
            <person name="Mache R."/>
            <person name="Puigdomenech P."/>
            <person name="De Simone V."/>
            <person name="Choisne N."/>
            <person name="Artiguenave F."/>
            <person name="Robert C."/>
            <person name="Brottier P."/>
            <person name="Wincker P."/>
            <person name="Cattolico L."/>
            <person name="Weissenbach J."/>
            <person name="Saurin W."/>
            <person name="Quetier F."/>
            <person name="Schaefer M."/>
            <person name="Mueller-Auer S."/>
            <person name="Gabel C."/>
            <person name="Fuchs M."/>
            <person name="Benes V."/>
            <person name="Wurmbach E."/>
            <person name="Drzonek H."/>
            <person name="Erfle H."/>
            <person name="Jordan N."/>
            <person name="Bangert S."/>
            <person name="Wiedelmann R."/>
            <person name="Kranz H."/>
            <person name="Voss H."/>
            <person name="Holland R."/>
            <person name="Brandt P."/>
            <person name="Nyakatura G."/>
            <person name="Vezzi A."/>
            <person name="D'Angelo M."/>
            <person name="Pallavicini A."/>
            <person name="Toppo S."/>
            <person name="Simionati B."/>
            <person name="Conrad A."/>
            <person name="Hornischer K."/>
            <person name="Kauer G."/>
            <person name="Loehnert T.-H."/>
            <person name="Nordsiek G."/>
            <person name="Reichelt J."/>
            <person name="Scharfe M."/>
            <person name="Schoen O."/>
            <person name="Bargues M."/>
            <person name="Terol J."/>
            <person name="Climent J."/>
            <person name="Navarro P."/>
            <person name="Collado C."/>
            <person name="Perez-Perez A."/>
            <person name="Ottenwaelder B."/>
            <person name="Duchemin D."/>
            <person name="Cooke R."/>
            <person name="Laudie M."/>
            <person name="Berger-Llauro C."/>
            <person name="Purnelle B."/>
            <person name="Masuy D."/>
            <person name="de Haan M."/>
            <person name="Maarse A.C."/>
            <person name="Alcaraz J.-P."/>
            <person name="Cottet A."/>
            <person name="Casacuberta E."/>
            <person name="Monfort A."/>
            <person name="Argiriou A."/>
            <person name="Flores M."/>
            <person name="Liguori R."/>
            <person name="Vitale D."/>
            <person name="Mannhaupt G."/>
            <person name="Haase D."/>
            <person name="Schoof H."/>
            <person name="Rudd S."/>
            <person name="Zaccaria P."/>
            <person name="Mewes H.-W."/>
            <person name="Mayer K.F.X."/>
            <person name="Kaul S."/>
            <person name="Town C.D."/>
            <person name="Koo H.L."/>
            <person name="Tallon L.J."/>
            <person name="Jenkins J."/>
            <person name="Rooney T."/>
            <person name="Rizzo M."/>
            <person name="Walts A."/>
            <person name="Utterback T."/>
            <person name="Fujii C.Y."/>
            <person name="Shea T.P."/>
            <person name="Creasy T.H."/>
            <person name="Haas B."/>
            <person name="Maiti R."/>
            <person name="Wu D."/>
            <person name="Peterson J."/>
            <person name="Van Aken S."/>
            <person name="Pai G."/>
            <person name="Militscher J."/>
            <person name="Sellers P."/>
            <person name="Gill J.E."/>
            <person name="Feldblyum T.V."/>
            <person name="Preuss D."/>
            <person name="Lin X."/>
            <person name="Nierman W.C."/>
            <person name="Salzberg S.L."/>
            <person name="White O."/>
            <person name="Venter J.C."/>
            <person name="Fraser C.M."/>
            <person name="Kaneko T."/>
            <person name="Nakamura Y."/>
            <person name="Sato S."/>
            <person name="Kato T."/>
            <person name="Asamizu E."/>
            <person name="Sasamoto S."/>
            <person name="Kimura T."/>
            <person name="Idesawa K."/>
            <person name="Kawashima K."/>
            <person name="Kishida Y."/>
            <person name="Kiyokawa C."/>
            <person name="Kohara M."/>
            <person name="Matsumoto M."/>
            <person name="Matsuno A."/>
            <person name="Muraki A."/>
            <person name="Nakayama S."/>
            <person name="Nakazaki N."/>
            <person name="Shinpo S."/>
            <person name="Takeuchi C."/>
            <person name="Wada T."/>
            <person name="Watanabe A."/>
            <person name="Yamada M."/>
            <person name="Yasuda M."/>
            <person name="Tabata S."/>
        </authorList>
    </citation>
    <scope>NUCLEOTIDE SEQUENCE [LARGE SCALE GENOMIC DNA]</scope>
    <source>
        <strain>cv. Columbia</strain>
    </source>
</reference>
<reference key="2">
    <citation type="journal article" date="2017" name="Plant J.">
        <title>Araport11: a complete reannotation of the Arabidopsis thaliana reference genome.</title>
        <authorList>
            <person name="Cheng C.Y."/>
            <person name="Krishnakumar V."/>
            <person name="Chan A.P."/>
            <person name="Thibaud-Nissen F."/>
            <person name="Schobel S."/>
            <person name="Town C.D."/>
        </authorList>
    </citation>
    <scope>GENOME REANNOTATION</scope>
    <source>
        <strain>cv. Columbia</strain>
    </source>
</reference>
<reference key="3">
    <citation type="journal article" date="2002" name="Crit. Rev. Plant Sci.">
        <title>Lectin receptor kinases in plants.</title>
        <authorList>
            <person name="Barre A."/>
            <person name="Herve C."/>
            <person name="Lescure B."/>
            <person name="Rouge P."/>
        </authorList>
    </citation>
    <scope>GENE FAMILY</scope>
</reference>
<reference key="4">
    <citation type="journal article" date="2009" name="J. Exp. Bot.">
        <title>Arabidopsis L-type lectin receptor kinases: phylogeny, classification, and expression profiles.</title>
        <authorList>
            <person name="Bouwmeester K."/>
            <person name="Govers F."/>
        </authorList>
    </citation>
    <scope>GENE FAMILY</scope>
    <scope>NOMENCLATURE</scope>
</reference>
<dbReference type="EC" id="2.7.11.1"/>
<dbReference type="EMBL" id="AL138657">
    <property type="protein sequence ID" value="CAB75472.1"/>
    <property type="status" value="ALT_INIT"/>
    <property type="molecule type" value="Genomic_DNA"/>
</dbReference>
<dbReference type="EMBL" id="CP002686">
    <property type="protein sequence ID" value="AEE78029.1"/>
    <property type="molecule type" value="Genomic_DNA"/>
</dbReference>
<dbReference type="EMBL" id="CP002686">
    <property type="protein sequence ID" value="ANM64566.1"/>
    <property type="molecule type" value="Genomic_DNA"/>
</dbReference>
<dbReference type="EMBL" id="CP002686">
    <property type="protein sequence ID" value="ANM64567.1"/>
    <property type="molecule type" value="Genomic_DNA"/>
</dbReference>
<dbReference type="PIR" id="T47483">
    <property type="entry name" value="T47483"/>
</dbReference>
<dbReference type="RefSeq" id="NP_001326585.1">
    <property type="nucleotide sequence ID" value="NM_001339206.1"/>
</dbReference>
<dbReference type="RefSeq" id="NP_001326586.1">
    <property type="nucleotide sequence ID" value="NM_001339205.1"/>
</dbReference>
<dbReference type="RefSeq" id="NP_190129.2">
    <property type="nucleotide sequence ID" value="NM_114412.3"/>
</dbReference>
<dbReference type="SMR" id="Q9M1G4"/>
<dbReference type="BioGRID" id="9001">
    <property type="interactions" value="2"/>
</dbReference>
<dbReference type="FunCoup" id="Q9M1G4">
    <property type="interactions" value="7"/>
</dbReference>
<dbReference type="IntAct" id="Q9M1G4">
    <property type="interactions" value="2"/>
</dbReference>
<dbReference type="GlyCosmos" id="Q9M1G4">
    <property type="glycosylation" value="5 sites, No reported glycans"/>
</dbReference>
<dbReference type="GlyGen" id="Q9M1G4">
    <property type="glycosylation" value="6 sites"/>
</dbReference>
<dbReference type="PaxDb" id="3702-AT3G45430.1"/>
<dbReference type="ProteomicsDB" id="238427"/>
<dbReference type="EnsemblPlants" id="AT3G45430.1">
    <property type="protein sequence ID" value="AT3G45430.1"/>
    <property type="gene ID" value="AT3G45430"/>
</dbReference>
<dbReference type="EnsemblPlants" id="AT3G45430.2">
    <property type="protein sequence ID" value="AT3G45430.2"/>
    <property type="gene ID" value="AT3G45430"/>
</dbReference>
<dbReference type="EnsemblPlants" id="AT3G45430.3">
    <property type="protein sequence ID" value="AT3G45430.3"/>
    <property type="gene ID" value="AT3G45430"/>
</dbReference>
<dbReference type="GeneID" id="823681"/>
<dbReference type="Gramene" id="AT3G45430.1">
    <property type="protein sequence ID" value="AT3G45430.1"/>
    <property type="gene ID" value="AT3G45430"/>
</dbReference>
<dbReference type="Gramene" id="AT3G45430.2">
    <property type="protein sequence ID" value="AT3G45430.2"/>
    <property type="gene ID" value="AT3G45430"/>
</dbReference>
<dbReference type="Gramene" id="AT3G45430.3">
    <property type="protein sequence ID" value="AT3G45430.3"/>
    <property type="gene ID" value="AT3G45430"/>
</dbReference>
<dbReference type="KEGG" id="ath:AT3G45430"/>
<dbReference type="Araport" id="AT3G45430"/>
<dbReference type="TAIR" id="AT3G45430">
    <property type="gene designation" value="LECRK-I.5"/>
</dbReference>
<dbReference type="eggNOG" id="ENOG502QSJ4">
    <property type="taxonomic scope" value="Eukaryota"/>
</dbReference>
<dbReference type="HOGENOM" id="CLU_000288_62_3_1"/>
<dbReference type="InParanoid" id="Q9M1G4"/>
<dbReference type="OMA" id="GVYYHRK"/>
<dbReference type="PhylomeDB" id="Q9M1G4"/>
<dbReference type="PRO" id="PR:Q9M1G4"/>
<dbReference type="Proteomes" id="UP000006548">
    <property type="component" value="Chromosome 3"/>
</dbReference>
<dbReference type="ExpressionAtlas" id="Q9M1G4">
    <property type="expression patterns" value="baseline and differential"/>
</dbReference>
<dbReference type="GO" id="GO:0005886">
    <property type="term" value="C:plasma membrane"/>
    <property type="evidence" value="ECO:0000353"/>
    <property type="project" value="TAIR"/>
</dbReference>
<dbReference type="GO" id="GO:0005524">
    <property type="term" value="F:ATP binding"/>
    <property type="evidence" value="ECO:0000314"/>
    <property type="project" value="TAIR"/>
</dbReference>
<dbReference type="GO" id="GO:0030246">
    <property type="term" value="F:carbohydrate binding"/>
    <property type="evidence" value="ECO:0007669"/>
    <property type="project" value="UniProtKB-KW"/>
</dbReference>
<dbReference type="GO" id="GO:0045028">
    <property type="term" value="F:G protein-coupled purinergic nucleotide receptor activity"/>
    <property type="evidence" value="ECO:0000316"/>
    <property type="project" value="TAIR"/>
</dbReference>
<dbReference type="GO" id="GO:0106310">
    <property type="term" value="F:protein serine kinase activity"/>
    <property type="evidence" value="ECO:0007669"/>
    <property type="project" value="RHEA"/>
</dbReference>
<dbReference type="GO" id="GO:0004674">
    <property type="term" value="F:protein serine/threonine kinase activity"/>
    <property type="evidence" value="ECO:0007669"/>
    <property type="project" value="UniProtKB-KW"/>
</dbReference>
<dbReference type="GO" id="GO:0140426">
    <property type="term" value="P:pathogen-associated molecular pattern receptor signaling pathway"/>
    <property type="evidence" value="ECO:0000315"/>
    <property type="project" value="TAIR"/>
</dbReference>
<dbReference type="GO" id="GO:0006468">
    <property type="term" value="P:protein phosphorylation"/>
    <property type="evidence" value="ECO:0000314"/>
    <property type="project" value="TAIR"/>
</dbReference>
<dbReference type="CDD" id="cd06899">
    <property type="entry name" value="lectin_legume_LecRK_Arcelin_ConA"/>
    <property type="match status" value="1"/>
</dbReference>
<dbReference type="CDD" id="cd14066">
    <property type="entry name" value="STKc_IRAK"/>
    <property type="match status" value="1"/>
</dbReference>
<dbReference type="FunFam" id="3.30.200.20:FF:000451">
    <property type="entry name" value="L-type lectin-domain containing receptor kinase I.9"/>
    <property type="match status" value="1"/>
</dbReference>
<dbReference type="FunFam" id="1.10.510.10:FF:000108">
    <property type="entry name" value="L-type lectin-domain containing receptor kinase S.4"/>
    <property type="match status" value="1"/>
</dbReference>
<dbReference type="FunFam" id="2.60.120.200:FF:000096">
    <property type="entry name" value="L-type lectin-domain containing receptor kinase V.9"/>
    <property type="match status" value="1"/>
</dbReference>
<dbReference type="Gene3D" id="2.60.120.200">
    <property type="match status" value="1"/>
</dbReference>
<dbReference type="Gene3D" id="3.30.200.20">
    <property type="entry name" value="Phosphorylase Kinase, domain 1"/>
    <property type="match status" value="1"/>
</dbReference>
<dbReference type="Gene3D" id="1.10.510.10">
    <property type="entry name" value="Transferase(Phosphotransferase) domain 1"/>
    <property type="match status" value="1"/>
</dbReference>
<dbReference type="InterPro" id="IPR013320">
    <property type="entry name" value="ConA-like_dom_sf"/>
</dbReference>
<dbReference type="InterPro" id="IPR011009">
    <property type="entry name" value="Kinase-like_dom_sf"/>
</dbReference>
<dbReference type="InterPro" id="IPR050528">
    <property type="entry name" value="L-type_Lectin-RKs"/>
</dbReference>
<dbReference type="InterPro" id="IPR001220">
    <property type="entry name" value="Legume_lectin_dom"/>
</dbReference>
<dbReference type="InterPro" id="IPR000719">
    <property type="entry name" value="Prot_kinase_dom"/>
</dbReference>
<dbReference type="InterPro" id="IPR017441">
    <property type="entry name" value="Protein_kinase_ATP_BS"/>
</dbReference>
<dbReference type="InterPro" id="IPR008271">
    <property type="entry name" value="Ser/Thr_kinase_AS"/>
</dbReference>
<dbReference type="PANTHER" id="PTHR27007">
    <property type="match status" value="1"/>
</dbReference>
<dbReference type="Pfam" id="PF00139">
    <property type="entry name" value="Lectin_legB"/>
    <property type="match status" value="1"/>
</dbReference>
<dbReference type="Pfam" id="PF00069">
    <property type="entry name" value="Pkinase"/>
    <property type="match status" value="1"/>
</dbReference>
<dbReference type="SMART" id="SM00220">
    <property type="entry name" value="S_TKc"/>
    <property type="match status" value="1"/>
</dbReference>
<dbReference type="SUPFAM" id="SSF49899">
    <property type="entry name" value="Concanavalin A-like lectins/glucanases"/>
    <property type="match status" value="1"/>
</dbReference>
<dbReference type="SUPFAM" id="SSF56112">
    <property type="entry name" value="Protein kinase-like (PK-like)"/>
    <property type="match status" value="1"/>
</dbReference>
<dbReference type="PROSITE" id="PS00107">
    <property type="entry name" value="PROTEIN_KINASE_ATP"/>
    <property type="match status" value="1"/>
</dbReference>
<dbReference type="PROSITE" id="PS50011">
    <property type="entry name" value="PROTEIN_KINASE_DOM"/>
    <property type="match status" value="1"/>
</dbReference>
<dbReference type="PROSITE" id="PS00108">
    <property type="entry name" value="PROTEIN_KINASE_ST"/>
    <property type="match status" value="1"/>
</dbReference>
<proteinExistence type="evidence at transcript level"/>
<sequence>MSKGLFLIWLISSFHLISFSTSSKDTSFVFNGFGQSNLALDGSATLLPNGLLQLAKDSQHQMGHAFIKKPIDFSSSKPLSFSTHFVCALVPKPGFEGGHGITFVISPTVDFTRAQPTRYMGIFNASTNGSPSSHLFAVELDTVRNPDFRETNNNHIGIDVNNPISVESAPASYFSKTAQKNVSINLSSGKPIQVWVDYHGNVLNVSVAPLEAEKPSLPLLSRSMNLSEIFSRRRLFVGFAAATGTSISYHYLLGWSFSTNRELSQLLDFSKLPQVPRPRAEHKKVQFALIIALPVILAIVVMAVLAGVYYHRKKKYAEVSEPWEKKYGTHRFSYKSLYIATKGFHKDRFLGRGGFGEVYRGDLPLNKTVAVKRVSHDGEQGMKQFVAEVVSMKSLKHRNLVPLLGYCRRKGELLLVSEYMPNGSLDQHLFDDQSPVLSWSQRFVILKGIASALFYLHTEAEQVVLHRDIKASNVMLDAELNGRLGDFGMARFHDHGGNAATTAAVGTVGYMAPELITMGASTITDVYAFGVFLLEVACGRKPVEFGVQVEKRFLIKWVCECWKKDSLLDAKDPRLGEEFVPEEVELVMKLGLLCTNIVPESRPAMGQVVLYLSGNLPLPDFSPYTLGIGSFTPVVVDAASLTVSFTSRNWSAPSASSSSANNSKDHEQPLEFKS</sequence>
<feature type="signal peptide" evidence="2">
    <location>
        <begin position="1"/>
        <end position="22"/>
    </location>
</feature>
<feature type="chain" id="PRO_0000403074" description="Probable L-type lectin-domain containing receptor kinase I.5">
    <location>
        <begin position="23"/>
        <end position="674"/>
    </location>
</feature>
<feature type="topological domain" description="Extracellular" evidence="2">
    <location>
        <begin position="23"/>
        <end position="286"/>
    </location>
</feature>
<feature type="transmembrane region" description="Helical" evidence="2">
    <location>
        <begin position="287"/>
        <end position="307"/>
    </location>
</feature>
<feature type="topological domain" description="Cytoplasmic" evidence="2">
    <location>
        <begin position="308"/>
        <end position="674"/>
    </location>
</feature>
<feature type="domain" description="Protein kinase" evidence="3">
    <location>
        <begin position="344"/>
        <end position="625"/>
    </location>
</feature>
<feature type="region of interest" description="Legume-lectin like">
    <location>
        <begin position="25"/>
        <end position="258"/>
    </location>
</feature>
<feature type="region of interest" description="Disordered" evidence="5">
    <location>
        <begin position="649"/>
        <end position="674"/>
    </location>
</feature>
<feature type="compositionally biased region" description="Low complexity" evidence="5">
    <location>
        <begin position="649"/>
        <end position="662"/>
    </location>
</feature>
<feature type="compositionally biased region" description="Basic and acidic residues" evidence="5">
    <location>
        <begin position="663"/>
        <end position="674"/>
    </location>
</feature>
<feature type="active site" description="Proton acceptor" evidence="3 4">
    <location>
        <position position="468"/>
    </location>
</feature>
<feature type="binding site" evidence="3">
    <location>
        <begin position="350"/>
        <end position="358"/>
    </location>
    <ligand>
        <name>ATP</name>
        <dbReference type="ChEBI" id="CHEBI:30616"/>
    </ligand>
</feature>
<feature type="binding site" evidence="3">
    <location>
        <position position="372"/>
    </location>
    <ligand>
        <name>ATP</name>
        <dbReference type="ChEBI" id="CHEBI:30616"/>
    </ligand>
</feature>
<feature type="glycosylation site" description="N-linked (GlcNAc...) asparagine" evidence="2">
    <location>
        <position position="124"/>
    </location>
</feature>
<feature type="glycosylation site" description="N-linked (GlcNAc...) asparagine" evidence="2">
    <location>
        <position position="181"/>
    </location>
</feature>
<feature type="glycosylation site" description="N-linked (GlcNAc...) asparagine" evidence="2">
    <location>
        <position position="185"/>
    </location>
</feature>
<feature type="glycosylation site" description="N-linked (GlcNAc...) asparagine" evidence="2">
    <location>
        <position position="204"/>
    </location>
</feature>
<feature type="glycosylation site" description="N-linked (GlcNAc...) asparagine" evidence="2">
    <location>
        <position position="225"/>
    </location>
</feature>
<comment type="catalytic activity">
    <reaction>
        <text>L-seryl-[protein] + ATP = O-phospho-L-seryl-[protein] + ADP + H(+)</text>
        <dbReference type="Rhea" id="RHEA:17989"/>
        <dbReference type="Rhea" id="RHEA-COMP:9863"/>
        <dbReference type="Rhea" id="RHEA-COMP:11604"/>
        <dbReference type="ChEBI" id="CHEBI:15378"/>
        <dbReference type="ChEBI" id="CHEBI:29999"/>
        <dbReference type="ChEBI" id="CHEBI:30616"/>
        <dbReference type="ChEBI" id="CHEBI:83421"/>
        <dbReference type="ChEBI" id="CHEBI:456216"/>
        <dbReference type="EC" id="2.7.11.1"/>
    </reaction>
</comment>
<comment type="catalytic activity">
    <reaction>
        <text>L-threonyl-[protein] + ATP = O-phospho-L-threonyl-[protein] + ADP + H(+)</text>
        <dbReference type="Rhea" id="RHEA:46608"/>
        <dbReference type="Rhea" id="RHEA-COMP:11060"/>
        <dbReference type="Rhea" id="RHEA-COMP:11605"/>
        <dbReference type="ChEBI" id="CHEBI:15378"/>
        <dbReference type="ChEBI" id="CHEBI:30013"/>
        <dbReference type="ChEBI" id="CHEBI:30616"/>
        <dbReference type="ChEBI" id="CHEBI:61977"/>
        <dbReference type="ChEBI" id="CHEBI:456216"/>
        <dbReference type="EC" id="2.7.11.1"/>
    </reaction>
</comment>
<comment type="subcellular location">
    <subcellularLocation>
        <location evidence="1">Cell membrane</location>
        <topology evidence="1">Single-pass type I membrane protein</topology>
    </subcellularLocation>
</comment>
<comment type="similarity">
    <text evidence="6">In the C-terminal section; belongs to the protein kinase superfamily. Ser/Thr protein kinase family.</text>
</comment>
<comment type="similarity">
    <text evidence="6">In the N-terminal section; belongs to the leguminous lectin family.</text>
</comment>
<comment type="sequence caution" evidence="6">
    <conflict type="erroneous initiation">
        <sequence resource="EMBL-CDS" id="CAB75472"/>
    </conflict>
    <text>Truncated N-terminus.</text>
</comment>
<protein>
    <recommendedName>
        <fullName>Probable L-type lectin-domain containing receptor kinase I.5</fullName>
        <shortName>LecRK-I.5</shortName>
        <ecNumber>2.7.11.1</ecNumber>
    </recommendedName>
</protein>
<keyword id="KW-0067">ATP-binding</keyword>
<keyword id="KW-1003">Cell membrane</keyword>
<keyword id="KW-0325">Glycoprotein</keyword>
<keyword id="KW-0418">Kinase</keyword>
<keyword id="KW-0430">Lectin</keyword>
<keyword id="KW-0472">Membrane</keyword>
<keyword id="KW-0547">Nucleotide-binding</keyword>
<keyword id="KW-0675">Receptor</keyword>
<keyword id="KW-1185">Reference proteome</keyword>
<keyword id="KW-0723">Serine/threonine-protein kinase</keyword>
<keyword id="KW-0732">Signal</keyword>
<keyword id="KW-0808">Transferase</keyword>
<keyword id="KW-0812">Transmembrane</keyword>
<keyword id="KW-1133">Transmembrane helix</keyword>
<name>LRK15_ARATH</name>